<comment type="function">
    <text evidence="1">Part of the ABC transporter complex MetNIQ involved in methionine import. Responsible for energy coupling to the transport system.</text>
</comment>
<comment type="catalytic activity">
    <reaction evidence="1">
        <text>L-methionine(out) + ATP + H2O = L-methionine(in) + ADP + phosphate + H(+)</text>
        <dbReference type="Rhea" id="RHEA:29779"/>
        <dbReference type="ChEBI" id="CHEBI:15377"/>
        <dbReference type="ChEBI" id="CHEBI:15378"/>
        <dbReference type="ChEBI" id="CHEBI:30616"/>
        <dbReference type="ChEBI" id="CHEBI:43474"/>
        <dbReference type="ChEBI" id="CHEBI:57844"/>
        <dbReference type="ChEBI" id="CHEBI:456216"/>
        <dbReference type="EC" id="7.4.2.11"/>
    </reaction>
</comment>
<comment type="catalytic activity">
    <reaction evidence="1">
        <text>D-methionine(out) + ATP + H2O = D-methionine(in) + ADP + phosphate + H(+)</text>
        <dbReference type="Rhea" id="RHEA:29767"/>
        <dbReference type="ChEBI" id="CHEBI:15377"/>
        <dbReference type="ChEBI" id="CHEBI:15378"/>
        <dbReference type="ChEBI" id="CHEBI:30616"/>
        <dbReference type="ChEBI" id="CHEBI:43474"/>
        <dbReference type="ChEBI" id="CHEBI:57932"/>
        <dbReference type="ChEBI" id="CHEBI:456216"/>
        <dbReference type="EC" id="7.4.2.11"/>
    </reaction>
</comment>
<comment type="subunit">
    <text evidence="1">The complex is composed of two ATP-binding proteins (MetN), two transmembrane proteins (MetI) and a solute-binding protein (MetQ).</text>
</comment>
<comment type="subcellular location">
    <subcellularLocation>
        <location evidence="1">Cell membrane</location>
        <topology evidence="1">Peripheral membrane protein</topology>
    </subcellularLocation>
</comment>
<comment type="similarity">
    <text evidence="1">Belongs to the ABC transporter superfamily. Methionine importer (TC 3.A.1.24) family.</text>
</comment>
<organism>
    <name type="scientific">Staphylococcus aureus (strain USA300)</name>
    <dbReference type="NCBI Taxonomy" id="367830"/>
    <lineage>
        <taxon>Bacteria</taxon>
        <taxon>Bacillati</taxon>
        <taxon>Bacillota</taxon>
        <taxon>Bacilli</taxon>
        <taxon>Bacillales</taxon>
        <taxon>Staphylococcaceae</taxon>
        <taxon>Staphylococcus</taxon>
    </lineage>
</organism>
<feature type="chain" id="PRO_0000270403" description="Methionine import ATP-binding protein MetN 1">
    <location>
        <begin position="1"/>
        <end position="341"/>
    </location>
</feature>
<feature type="domain" description="ABC transporter" evidence="1">
    <location>
        <begin position="2"/>
        <end position="241"/>
    </location>
</feature>
<feature type="binding site" evidence="1">
    <location>
        <begin position="38"/>
        <end position="45"/>
    </location>
    <ligand>
        <name>ATP</name>
        <dbReference type="ChEBI" id="CHEBI:30616"/>
    </ligand>
</feature>
<keyword id="KW-0029">Amino-acid transport</keyword>
<keyword id="KW-0067">ATP-binding</keyword>
<keyword id="KW-1003">Cell membrane</keyword>
<keyword id="KW-0472">Membrane</keyword>
<keyword id="KW-0547">Nucleotide-binding</keyword>
<keyword id="KW-1278">Translocase</keyword>
<keyword id="KW-0813">Transport</keyword>
<reference key="1">
    <citation type="journal article" date="2006" name="Lancet">
        <title>Complete genome sequence of USA300, an epidemic clone of community-acquired meticillin-resistant Staphylococcus aureus.</title>
        <authorList>
            <person name="Diep B.A."/>
            <person name="Gill S.R."/>
            <person name="Chang R.F."/>
            <person name="Phan T.H."/>
            <person name="Chen J.H."/>
            <person name="Davidson M.G."/>
            <person name="Lin F."/>
            <person name="Lin J."/>
            <person name="Carleton H.A."/>
            <person name="Mongodin E.F."/>
            <person name="Sensabaugh G.F."/>
            <person name="Perdreau-Remington F."/>
        </authorList>
    </citation>
    <scope>NUCLEOTIDE SEQUENCE [LARGE SCALE GENOMIC DNA]</scope>
    <source>
        <strain>USA300</strain>
    </source>
</reference>
<gene>
    <name evidence="1" type="primary">metN1</name>
    <name type="ordered locus">SAUSA300_0435</name>
</gene>
<name>METN1_STAA3</name>
<sequence length="341" mass="38676">MIEFRQVSKTFNKKKQKIDALKDVSFTVNRNDIFGVIGYSGAGKSTLVRLVNHLEAASNGQVIVDGHDITNYSDKMMRDIKKDIGMIFQHFNLLNSATVFKNVAMPLILSKKSKTEIKQRVTEMLEFVGLSDKKDQFPDELSGGQKQRVAIARALVTNPKILLCDEATSALDPATTASILTLLKNVNQTFGITIMMITHEMRVIKDICNRVAVMEKGKVVETGTVKEVFSHPKTTIAQNFVSTVIQTEPSTSLIRRLNDEQVGDFKDYKIFVEETQVTQPIINDLIQICGREVKILFSSMSEIQGNTVCYMWLRFNMDQQFEDTAINQYFKEKNIQFEEVH</sequence>
<accession>Q2FJI0</accession>
<evidence type="ECO:0000255" key="1">
    <source>
        <dbReference type="HAMAP-Rule" id="MF_01719"/>
    </source>
</evidence>
<protein>
    <recommendedName>
        <fullName evidence="1">Methionine import ATP-binding protein MetN 1</fullName>
        <ecNumber evidence="1">7.4.2.11</ecNumber>
    </recommendedName>
</protein>
<dbReference type="EC" id="7.4.2.11" evidence="1"/>
<dbReference type="EMBL" id="CP000255">
    <property type="protein sequence ID" value="ABD22911.1"/>
    <property type="molecule type" value="Genomic_DNA"/>
</dbReference>
<dbReference type="RefSeq" id="WP_000569286.1">
    <property type="nucleotide sequence ID" value="NZ_CP027476.1"/>
</dbReference>
<dbReference type="SMR" id="Q2FJI0"/>
<dbReference type="KEGG" id="saa:SAUSA300_0435"/>
<dbReference type="HOGENOM" id="CLU_000604_1_3_9"/>
<dbReference type="Proteomes" id="UP000001939">
    <property type="component" value="Chromosome"/>
</dbReference>
<dbReference type="GO" id="GO:0005886">
    <property type="term" value="C:plasma membrane"/>
    <property type="evidence" value="ECO:0007669"/>
    <property type="project" value="UniProtKB-SubCell"/>
</dbReference>
<dbReference type="GO" id="GO:0033232">
    <property type="term" value="F:ABC-type D-methionine transporter activity"/>
    <property type="evidence" value="ECO:0007669"/>
    <property type="project" value="UniProtKB-EC"/>
</dbReference>
<dbReference type="GO" id="GO:0005524">
    <property type="term" value="F:ATP binding"/>
    <property type="evidence" value="ECO:0007669"/>
    <property type="project" value="UniProtKB-KW"/>
</dbReference>
<dbReference type="GO" id="GO:0016887">
    <property type="term" value="F:ATP hydrolysis activity"/>
    <property type="evidence" value="ECO:0007669"/>
    <property type="project" value="InterPro"/>
</dbReference>
<dbReference type="CDD" id="cd03258">
    <property type="entry name" value="ABC_MetN_methionine_transporter"/>
    <property type="match status" value="1"/>
</dbReference>
<dbReference type="FunFam" id="3.40.50.300:FF:000056">
    <property type="entry name" value="Cell division ATP-binding protein FtsE"/>
    <property type="match status" value="1"/>
</dbReference>
<dbReference type="Gene3D" id="3.30.70.260">
    <property type="match status" value="1"/>
</dbReference>
<dbReference type="Gene3D" id="3.40.50.300">
    <property type="entry name" value="P-loop containing nucleotide triphosphate hydrolases"/>
    <property type="match status" value="1"/>
</dbReference>
<dbReference type="InterPro" id="IPR003593">
    <property type="entry name" value="AAA+_ATPase"/>
</dbReference>
<dbReference type="InterPro" id="IPR003439">
    <property type="entry name" value="ABC_transporter-like_ATP-bd"/>
</dbReference>
<dbReference type="InterPro" id="IPR017871">
    <property type="entry name" value="ABC_transporter-like_CS"/>
</dbReference>
<dbReference type="InterPro" id="IPR045865">
    <property type="entry name" value="ACT-like_dom_sf"/>
</dbReference>
<dbReference type="InterPro" id="IPR041701">
    <property type="entry name" value="MetN_ABC"/>
</dbReference>
<dbReference type="InterPro" id="IPR050086">
    <property type="entry name" value="MetN_ABC_transporter-like"/>
</dbReference>
<dbReference type="InterPro" id="IPR018449">
    <property type="entry name" value="NIL_domain"/>
</dbReference>
<dbReference type="InterPro" id="IPR027417">
    <property type="entry name" value="P-loop_NTPase"/>
</dbReference>
<dbReference type="PANTHER" id="PTHR43166">
    <property type="entry name" value="AMINO ACID IMPORT ATP-BINDING PROTEIN"/>
    <property type="match status" value="1"/>
</dbReference>
<dbReference type="PANTHER" id="PTHR43166:SF30">
    <property type="entry name" value="METHIONINE IMPORT ATP-BINDING PROTEIN METN"/>
    <property type="match status" value="1"/>
</dbReference>
<dbReference type="Pfam" id="PF00005">
    <property type="entry name" value="ABC_tran"/>
    <property type="match status" value="1"/>
</dbReference>
<dbReference type="Pfam" id="PF09383">
    <property type="entry name" value="NIL"/>
    <property type="match status" value="1"/>
</dbReference>
<dbReference type="SMART" id="SM00382">
    <property type="entry name" value="AAA"/>
    <property type="match status" value="1"/>
</dbReference>
<dbReference type="SMART" id="SM00930">
    <property type="entry name" value="NIL"/>
    <property type="match status" value="1"/>
</dbReference>
<dbReference type="SUPFAM" id="SSF55021">
    <property type="entry name" value="ACT-like"/>
    <property type="match status" value="1"/>
</dbReference>
<dbReference type="SUPFAM" id="SSF52540">
    <property type="entry name" value="P-loop containing nucleoside triphosphate hydrolases"/>
    <property type="match status" value="1"/>
</dbReference>
<dbReference type="PROSITE" id="PS00211">
    <property type="entry name" value="ABC_TRANSPORTER_1"/>
    <property type="match status" value="1"/>
</dbReference>
<dbReference type="PROSITE" id="PS50893">
    <property type="entry name" value="ABC_TRANSPORTER_2"/>
    <property type="match status" value="1"/>
</dbReference>
<dbReference type="PROSITE" id="PS51264">
    <property type="entry name" value="METN"/>
    <property type="match status" value="1"/>
</dbReference>
<proteinExistence type="inferred from homology"/>